<dbReference type="EMBL" id="U00096">
    <property type="protein sequence ID" value="AAC74517.2"/>
    <property type="molecule type" value="Genomic_DNA"/>
</dbReference>
<dbReference type="EMBL" id="AP009048">
    <property type="protein sequence ID" value="BAA15068.1"/>
    <property type="molecule type" value="Genomic_DNA"/>
</dbReference>
<dbReference type="RefSeq" id="NP_415952.2">
    <property type="nucleotide sequence ID" value="NC_000913.3"/>
</dbReference>
<dbReference type="RefSeq" id="WP_001303492.1">
    <property type="nucleotide sequence ID" value="NZ_SSZK01000021.1"/>
</dbReference>
<dbReference type="SMR" id="P76104"/>
<dbReference type="BioGRID" id="4263353">
    <property type="interactions" value="72"/>
</dbReference>
<dbReference type="BioGRID" id="850355">
    <property type="interactions" value="1"/>
</dbReference>
<dbReference type="DIP" id="DIP-11650N"/>
<dbReference type="FunCoup" id="P76104">
    <property type="interactions" value="226"/>
</dbReference>
<dbReference type="IntAct" id="P76104">
    <property type="interactions" value="50"/>
</dbReference>
<dbReference type="STRING" id="511145.b1435"/>
<dbReference type="MEROPS" id="U32.003"/>
<dbReference type="jPOST" id="P76104"/>
<dbReference type="PaxDb" id="511145-b1435"/>
<dbReference type="EnsemblBacteria" id="AAC74517">
    <property type="protein sequence ID" value="AAC74517"/>
    <property type="gene ID" value="b1435"/>
</dbReference>
<dbReference type="GeneID" id="945993"/>
<dbReference type="KEGG" id="ecj:JW1431"/>
<dbReference type="KEGG" id="eco:b1435"/>
<dbReference type="KEGG" id="ecoc:C3026_08355"/>
<dbReference type="PATRIC" id="fig|1411691.4.peg.834"/>
<dbReference type="EchoBASE" id="EB3522"/>
<dbReference type="eggNOG" id="COG0826">
    <property type="taxonomic scope" value="Bacteria"/>
</dbReference>
<dbReference type="HOGENOM" id="CLU_011540_5_0_6"/>
<dbReference type="InParanoid" id="P76104"/>
<dbReference type="OMA" id="MKDNNQS"/>
<dbReference type="OrthoDB" id="9807498at2"/>
<dbReference type="PhylomeDB" id="P76104"/>
<dbReference type="BioCyc" id="EcoCyc:G6746-MONOMER"/>
<dbReference type="BioCyc" id="MetaCyc:G6746-MONOMER"/>
<dbReference type="PRO" id="PR:P76104"/>
<dbReference type="Proteomes" id="UP000000625">
    <property type="component" value="Chromosome"/>
</dbReference>
<dbReference type="GO" id="GO:0000154">
    <property type="term" value="P:rRNA modification"/>
    <property type="evidence" value="ECO:0000315"/>
    <property type="project" value="EcoCyc"/>
</dbReference>
<dbReference type="InterPro" id="IPR020988">
    <property type="entry name" value="Pept_U32_collagenase"/>
</dbReference>
<dbReference type="InterPro" id="IPR001539">
    <property type="entry name" value="Peptidase_U32"/>
</dbReference>
<dbReference type="InterPro" id="IPR051454">
    <property type="entry name" value="RNA/ubiquinone_mod_enzymes"/>
</dbReference>
<dbReference type="PANTHER" id="PTHR30217:SF10">
    <property type="entry name" value="23S RRNA 5-HYDROXYCYTIDINE C2501 SYNTHASE"/>
    <property type="match status" value="1"/>
</dbReference>
<dbReference type="PANTHER" id="PTHR30217">
    <property type="entry name" value="PEPTIDASE U32 FAMILY"/>
    <property type="match status" value="1"/>
</dbReference>
<dbReference type="Pfam" id="PF12392">
    <property type="entry name" value="DUF3656"/>
    <property type="match status" value="1"/>
</dbReference>
<dbReference type="Pfam" id="PF01136">
    <property type="entry name" value="Peptidase_U32"/>
    <property type="match status" value="1"/>
</dbReference>
<dbReference type="PROSITE" id="PS01276">
    <property type="entry name" value="PEPTIDASE_U32"/>
    <property type="match status" value="1"/>
</dbReference>
<organism>
    <name type="scientific">Escherichia coli (strain K12)</name>
    <dbReference type="NCBI Taxonomy" id="83333"/>
    <lineage>
        <taxon>Bacteria</taxon>
        <taxon>Pseudomonadati</taxon>
        <taxon>Pseudomonadota</taxon>
        <taxon>Gammaproteobacteria</taxon>
        <taxon>Enterobacterales</taxon>
        <taxon>Enterobacteriaceae</taxon>
        <taxon>Escherichia</taxon>
    </lineage>
</organism>
<protein>
    <recommendedName>
        <fullName evidence="3">23S rRNA 5-hydroxycytidine C2501 synthase</fullName>
    </recommendedName>
    <alternativeName>
        <fullName evidence="2">Large subunit ribosomal RNA hydroxylation A</fullName>
    </alternativeName>
</protein>
<accession>P76104</accession>
<accession>P76865</accession>
<accession>P76867</accession>
<accession>P76868</accession>
<comment type="function">
    <text evidence="1">Responsible for the formation of the 5-hydroxycytidine modification at the C2501 position (ho5C2501) of 23S rRNA. May be a Fe-S protein that catalyzes ho5C2501 formation using prephenate as a hydroxyl group donor.</text>
</comment>
<comment type="activity regulation">
    <text evidence="1">Iron-sulfur clusters and prephenate are required for ho5C2501 formation.</text>
</comment>
<comment type="subunit">
    <text evidence="1">Interacts with precursors of the 50S ribosomal subunit.</text>
</comment>
<comment type="interaction">
    <interactant intactId="EBI-556974">
        <id>P76104</id>
    </interactant>
    <interactant intactId="EBI-548098">
        <id>P05824</id>
        <label>recN</label>
    </interactant>
    <organismsDiffer>false</organismsDiffer>
    <experiments>3</experiments>
</comment>
<comment type="disruption phenotype">
    <text evidence="1">Deletion of the gene results in complete loss of the ho5C2501 modification.</text>
</comment>
<comment type="similarity">
    <text evidence="3">Belongs to the peptidase U32 family.</text>
</comment>
<sequence>MTVSSHRLELLSPARDAAIAREAILHGADAVYIGGPGFGARHNASNSLKDIAELVPFAHRYGAKIFVTLNTILHDDELEPAQRLITDLYQTGVDALIVQDMGILELDIPPIELHASTQCDIRTVEKAKFLSDVGFTQIVLARELNLDQIRAIHQATDATIEFFIHGALCVAYSGQCYISHAQTGRSANRGDCSQACRLPYTLKDDQGRVVSYEKHLLSMKDNDQTANLGALIDAGVRSFKIEGRYKDMSYVKNITAHYRQMLDAIIEERGDLARASSGRTEHFFVPSTEKTFHRGSTDYFVNARKGDIGAFDSPKFIGLPVGEVVKVAKDHLDVAVTEPLANGDGLNVLIKREVVGFRANTVEKTGENQYRVWPNEMPADLHKIRPHHPLNRNLDHNWQQALTKTSSERRVAVDIELGGWQEQLILTLTSEEGVSITHTLDGQFDEANNAEKAMNNLKDGLAKLGQTLYYARDVQINLPGALFVPNSLLNQFRREAADMLDAARLASYQRGSRKPVADPAPVYPQTHLSFLANVYNQKAREFYHRYGVQLIDAAYEAHEEKGEVPVMITKHCLRFAFNLCPKQAKGNIKSWKATPMQLVNGDEVLTLKFDCRPCEMHVIGKIKNHILKMPLPGSVVASVSPDELLKTLPKRKG</sequence>
<gene>
    <name evidence="2" type="primary">rlhA</name>
    <name type="synonym">ydcP</name>
    <name type="ordered locus">b1435</name>
    <name type="ordered locus">JW1431</name>
</gene>
<keyword id="KW-1185">Reference proteome</keyword>
<keyword id="KW-0698">rRNA processing</keyword>
<name>RLHA_ECOLI</name>
<feature type="chain" id="PRO_0000028524" description="23S rRNA 5-hydroxycytidine C2501 synthase">
    <location>
        <begin position="1"/>
        <end position="653"/>
    </location>
</feature>
<feature type="mutagenesis site" description="Strong decrease in activity." evidence="1">
    <original>E</original>
    <variation>A</variation>
    <location>
        <position position="161"/>
    </location>
</feature>
<feature type="mutagenesis site" description="No change in activity." evidence="1">
    <original>H</original>
    <variation>A</variation>
    <location>
        <position position="165"/>
    </location>
</feature>
<feature type="mutagenesis site" description="Loss of activity." evidence="1">
    <original>C</original>
    <variation>A</variation>
    <location>
        <position position="169"/>
    </location>
</feature>
<feature type="mutagenesis site" description="No change in activity." evidence="1">
    <original>Q</original>
    <variation>A</variation>
    <location>
        <position position="175"/>
    </location>
</feature>
<feature type="mutagenesis site" description="Loss of activity." evidence="1">
    <original>C</original>
    <variation>A</variation>
    <location>
        <position position="176"/>
    </location>
</feature>
<feature type="mutagenesis site" description="Loss of activity." evidence="1">
    <original>C</original>
    <variation>A</variation>
    <location>
        <position position="580"/>
    </location>
</feature>
<feature type="mutagenesis site" description="Loss of activity." evidence="1">
    <original>C</original>
    <variation>A</variation>
    <location>
        <position position="611"/>
    </location>
</feature>
<proteinExistence type="evidence at protein level"/>
<reference key="1">
    <citation type="journal article" date="1996" name="DNA Res.">
        <title>A 570-kb DNA sequence of the Escherichia coli K-12 genome corresponding to the 28.0-40.1 min region on the linkage map.</title>
        <authorList>
            <person name="Aiba H."/>
            <person name="Baba T."/>
            <person name="Fujita K."/>
            <person name="Hayashi K."/>
            <person name="Inada T."/>
            <person name="Isono K."/>
            <person name="Itoh T."/>
            <person name="Kasai H."/>
            <person name="Kashimoto K."/>
            <person name="Kimura S."/>
            <person name="Kitakawa M."/>
            <person name="Kitagawa M."/>
            <person name="Makino K."/>
            <person name="Miki T."/>
            <person name="Mizobuchi K."/>
            <person name="Mori H."/>
            <person name="Mori T."/>
            <person name="Motomura K."/>
            <person name="Nakade S."/>
            <person name="Nakamura Y."/>
            <person name="Nashimoto H."/>
            <person name="Nishio Y."/>
            <person name="Oshima T."/>
            <person name="Saito N."/>
            <person name="Sampei G."/>
            <person name="Seki Y."/>
            <person name="Sivasundaram S."/>
            <person name="Tagami H."/>
            <person name="Takeda J."/>
            <person name="Takemoto K."/>
            <person name="Takeuchi Y."/>
            <person name="Wada C."/>
            <person name="Yamamoto Y."/>
            <person name="Horiuchi T."/>
        </authorList>
    </citation>
    <scope>NUCLEOTIDE SEQUENCE [LARGE SCALE GENOMIC DNA]</scope>
    <source>
        <strain>K12 / W3110 / ATCC 27325 / DSM 5911</strain>
    </source>
</reference>
<reference key="2">
    <citation type="journal article" date="1997" name="Science">
        <title>The complete genome sequence of Escherichia coli K-12.</title>
        <authorList>
            <person name="Blattner F.R."/>
            <person name="Plunkett G. III"/>
            <person name="Bloch C.A."/>
            <person name="Perna N.T."/>
            <person name="Burland V."/>
            <person name="Riley M."/>
            <person name="Collado-Vides J."/>
            <person name="Glasner J.D."/>
            <person name="Rode C.K."/>
            <person name="Mayhew G.F."/>
            <person name="Gregor J."/>
            <person name="Davis N.W."/>
            <person name="Kirkpatrick H.A."/>
            <person name="Goeden M.A."/>
            <person name="Rose D.J."/>
            <person name="Mau B."/>
            <person name="Shao Y."/>
        </authorList>
    </citation>
    <scope>NUCLEOTIDE SEQUENCE [LARGE SCALE GENOMIC DNA]</scope>
    <source>
        <strain>K12 / MG1655 / ATCC 47076</strain>
    </source>
</reference>
<reference key="3">
    <citation type="journal article" date="2006" name="Mol. Syst. Biol.">
        <title>Highly accurate genome sequences of Escherichia coli K-12 strains MG1655 and W3110.</title>
        <authorList>
            <person name="Hayashi K."/>
            <person name="Morooka N."/>
            <person name="Yamamoto Y."/>
            <person name="Fujita K."/>
            <person name="Isono K."/>
            <person name="Choi S."/>
            <person name="Ohtsubo E."/>
            <person name="Baba T."/>
            <person name="Wanner B.L."/>
            <person name="Mori H."/>
            <person name="Horiuchi T."/>
        </authorList>
    </citation>
    <scope>NUCLEOTIDE SEQUENCE [LARGE SCALE GENOMIC DNA]</scope>
    <source>
        <strain>K12 / W3110 / ATCC 27325 / DSM 5911</strain>
    </source>
</reference>
<reference key="4">
    <citation type="journal article" date="2017" name="Nucleic Acids Res.">
        <title>Biogenesis and iron-dependency of ribosomal RNA hydroxylation.</title>
        <authorList>
            <person name="Kimura S."/>
            <person name="Sakai Y."/>
            <person name="Ishiguro K."/>
            <person name="Suzuki T."/>
        </authorList>
    </citation>
    <scope>FUNCTION</scope>
    <scope>ACTIVITY REGULATION</scope>
    <scope>SUBUNIT</scope>
    <scope>DISRUPTION PHENOTYPE</scope>
    <scope>MUTAGENESIS OF GLU-161; HIS-165; CYS-169; GLN-175; CYS-176; CYS-580 AND CYS-611</scope>
</reference>
<evidence type="ECO:0000269" key="1">
    <source>
    </source>
</evidence>
<evidence type="ECO:0000303" key="2">
    <source>
    </source>
</evidence>
<evidence type="ECO:0000305" key="3"/>